<reference key="1">
    <citation type="journal article" date="1998" name="Genes Dev.">
        <title>Caenorhabditis elegans Akt/PKB transduces insulin receptor-like signals from AGE-1 PI3 kinase to the DAF-16 transcription factor.</title>
        <authorList>
            <person name="Paradis S."/>
            <person name="Ruvkun G."/>
        </authorList>
    </citation>
    <scope>NUCLEOTIDE SEQUENCE [MRNA] (ISOFORMS A AND B)</scope>
    <scope>FUNCTION</scope>
    <scope>MUTAGENESIS OF ALA-183</scope>
    <scope>TISSUE SPECIFICITY</scope>
    <scope>DEVELOPMENTAL STAGE</scope>
</reference>
<reference key="2">
    <citation type="journal article" date="1998" name="Science">
        <title>Genome sequence of the nematode C. elegans: a platform for investigating biology.</title>
        <authorList>
            <consortium name="The C. elegans sequencing consortium"/>
        </authorList>
    </citation>
    <scope>NUCLEOTIDE SEQUENCE [LARGE SCALE GENOMIC DNA]</scope>
    <scope>ALTERNATIVE SPLICING</scope>
    <source>
        <strain>Bristol N2</strain>
    </source>
</reference>
<reference key="3">
    <citation type="journal article" date="1999" name="Genes Dev.">
        <title>A PDK1 homolog is necessary and sufficient to transduce AGE-1 PI3 kinase signals that regulate diapause in Caenorhabditis elegans.</title>
        <authorList>
            <person name="Paradis S."/>
            <person name="Ailion M."/>
            <person name="Toker A."/>
            <person name="Thomas J.H."/>
            <person name="Ruvkun G."/>
        </authorList>
    </citation>
    <scope>FUNCTION</scope>
</reference>
<reference key="4">
    <citation type="journal article" date="2001" name="Curr. Biol.">
        <title>daf-16 integrates developmental and environmental inputs to mediate aging in the nematode Caenorhabditis elegans.</title>
        <authorList>
            <person name="Henderson S.T."/>
            <person name="Johnson T.E."/>
        </authorList>
    </citation>
    <scope>FUNCTION</scope>
</reference>
<reference key="5">
    <citation type="journal article" date="2001" name="Nat. Genet.">
        <title>Regulation of the Caenorhabditis elegans longevity protein DAF-16 by insulin/IGF-1 and germline signaling.</title>
        <authorList>
            <person name="Lin K."/>
            <person name="Hsin H."/>
            <person name="Libina N."/>
            <person name="Kenyon C."/>
        </authorList>
    </citation>
    <scope>FUNCTION</scope>
</reference>
<reference key="6">
    <citation type="journal article" date="2004" name="Dev. Cell">
        <title>C. elegans SGK-1 is the critical component in the Akt/PKB kinase complex to control stress response and life span.</title>
        <authorList>
            <person name="Hertweck M."/>
            <person name="Goebel C."/>
            <person name="Baumeister R."/>
        </authorList>
    </citation>
    <scope>FUNCTION</scope>
    <scope>ACTIVITY REGULATION</scope>
    <scope>INTERACTION WITH PDK-1; SGK-1; AKT-2 AND DAF-16</scope>
    <scope>DISRUPTION PHENOTYPE</scope>
</reference>
<reference key="7">
    <citation type="journal article" date="2006" name="Neuron">
        <title>The insulin/PI 3-kinase pathway regulates salt chemotaxis learning in Caenorhabditis elegans.</title>
        <authorList>
            <person name="Tomioka M."/>
            <person name="Adachi T."/>
            <person name="Suzuki H."/>
            <person name="Kunitomo H."/>
            <person name="Schafer W.R."/>
            <person name="Iino Y."/>
        </authorList>
    </citation>
    <scope>FUNCTION</scope>
</reference>
<reference key="8">
    <citation type="journal article" date="2008" name="Aging Cell">
        <title>The DAF-2 insulin-like signaling pathway independently regulates aging and immunity in C. elegans.</title>
        <authorList>
            <person name="Evans E.A."/>
            <person name="Chen W.C."/>
            <person name="Tan M.-W."/>
        </authorList>
    </citation>
    <scope>FUNCTION</scope>
    <scope>DISRUPTION PHENOTYPE</scope>
</reference>
<reference key="9">
    <citation type="journal article" date="2008" name="Cell">
        <title>Direct inhibition of the longevity-promoting factor SKN-1 by insulin-like signaling in C. elegans.</title>
        <authorList>
            <person name="Tullet J.M."/>
            <person name="Hertweck M."/>
            <person name="An J.H."/>
            <person name="Baker J."/>
            <person name="Hwang J.Y."/>
            <person name="Liu S."/>
            <person name="Oliveira R.P."/>
            <person name="Baumeister R."/>
            <person name="Blackwell T.K."/>
        </authorList>
    </citation>
    <scope>FUNCTION</scope>
</reference>
<reference key="10">
    <citation type="journal article" date="2008" name="Cell Calcium">
        <title>Ca(2+)/Calmodulin-binding proteins from the C. elegans proteome.</title>
        <authorList>
            <person name="Shen X."/>
            <person name="Valencia C.A."/>
            <person name="Gao W."/>
            <person name="Cotten S.W."/>
            <person name="Dong B."/>
            <person name="Huang B.C."/>
            <person name="Liu R."/>
        </authorList>
    </citation>
    <scope>INTERACTION WITH CMD-1</scope>
</reference>
<reference key="11">
    <citation type="journal article" date="2009" name="Cell">
        <title>A PP2A regulatory subunit regulates C. elegans insulin/IGF-1 signaling by modulating AKT-1 phosphorylation.</title>
        <authorList>
            <person name="Padmanabhan S."/>
            <person name="Mukhopadhyay A."/>
            <person name="Narasimhan S.D."/>
            <person name="Tesz G."/>
            <person name="Czech M.P."/>
            <person name="Tissenbaum H.A."/>
        </authorList>
    </citation>
    <scope>INTERACTION WITH PPTR-1</scope>
    <scope>TISSUE SPECIFICITY</scope>
    <scope>PHOSPHORYLATION AT THR-350 AND SER-517</scope>
</reference>
<reference key="12">
    <citation type="journal article" date="2012" name="PLoS Genet.">
        <title>Cell-nonautonomous signaling of FOXO/DAF-16 to the stem cells of Caenorhabditis elegans.</title>
        <authorList>
            <person name="Qi W."/>
            <person name="Huang X."/>
            <person name="Neumann-Haefelin E."/>
            <person name="Schulze E."/>
            <person name="Baumeister R."/>
        </authorList>
    </citation>
    <scope>FUNCTION</scope>
</reference>
<reference key="13">
    <citation type="journal article" date="2014" name="Nat. Struct. Mol. Biol.">
        <title>Caspase-activated phosphoinositide binding by CNT-1 promotes apoptosis by inhibiting the AKT pathway.</title>
        <authorList>
            <person name="Nakagawa A."/>
            <person name="Sullivan K.D."/>
            <person name="Xue D."/>
        </authorList>
    </citation>
    <scope>FUNCTION</scope>
    <scope>DOMAIN</scope>
    <scope>MUTAGENESIS OF ALA-183 AND LYS-222</scope>
</reference>
<reference key="14">
    <citation type="journal article" date="2019" name="PLoS Genet.">
        <title>Myoinhibitory peptide signaling modulates aversive gustatory learning in Caenorhabditis elegans.</title>
        <authorList>
            <person name="Peymen K."/>
            <person name="Watteyne J."/>
            <person name="Borghgraef C."/>
            <person name="Van Sinay E."/>
            <person name="Beets I."/>
            <person name="Schoofs L."/>
        </authorList>
    </citation>
    <scope>FUNCTION</scope>
</reference>
<evidence type="ECO:0000255" key="1">
    <source>
        <dbReference type="PROSITE-ProRule" id="PRU00145"/>
    </source>
</evidence>
<evidence type="ECO:0000255" key="2">
    <source>
        <dbReference type="PROSITE-ProRule" id="PRU00159"/>
    </source>
</evidence>
<evidence type="ECO:0000255" key="3">
    <source>
        <dbReference type="PROSITE-ProRule" id="PRU00618"/>
    </source>
</evidence>
<evidence type="ECO:0000255" key="4">
    <source>
        <dbReference type="PROSITE-ProRule" id="PRU10027"/>
    </source>
</evidence>
<evidence type="ECO:0000269" key="5">
    <source>
    </source>
</evidence>
<evidence type="ECO:0000269" key="6">
    <source>
    </source>
</evidence>
<evidence type="ECO:0000269" key="7">
    <source>
    </source>
</evidence>
<evidence type="ECO:0000269" key="8">
    <source>
    </source>
</evidence>
<evidence type="ECO:0000269" key="9">
    <source>
    </source>
</evidence>
<evidence type="ECO:0000269" key="10">
    <source>
    </source>
</evidence>
<evidence type="ECO:0000269" key="11">
    <source>
    </source>
</evidence>
<evidence type="ECO:0000269" key="12">
    <source>
    </source>
</evidence>
<evidence type="ECO:0000269" key="13">
    <source>
    </source>
</evidence>
<evidence type="ECO:0000269" key="14">
    <source>
    </source>
</evidence>
<evidence type="ECO:0000269" key="15">
    <source>
    </source>
</evidence>
<evidence type="ECO:0000269" key="16">
    <source>
    </source>
</evidence>
<evidence type="ECO:0000269" key="17">
    <source>
    </source>
</evidence>
<evidence type="ECO:0000303" key="18">
    <source>
    </source>
</evidence>
<evidence type="ECO:0000305" key="19"/>
<evidence type="ECO:0000312" key="20">
    <source>
        <dbReference type="WormBase" id="C12D8.10a"/>
    </source>
</evidence>
<evidence type="ECO:0000312" key="21">
    <source>
        <dbReference type="WormBase" id="C12D8.10b"/>
    </source>
</evidence>
<evidence type="ECO:0000312" key="22">
    <source>
        <dbReference type="WormBase" id="C12D8.10c"/>
    </source>
</evidence>
<gene>
    <name evidence="20" type="primary">akt-1</name>
    <name evidence="20" type="ORF">C12D8.10</name>
</gene>
<feature type="chain" id="PRO_0000085615" description="Serine/threonine-protein kinase akt-1">
    <location>
        <begin position="1"/>
        <end position="541"/>
    </location>
</feature>
<feature type="domain" description="PH" evidence="1">
    <location>
        <begin position="15"/>
        <end position="118"/>
    </location>
</feature>
<feature type="domain" description="Protein kinase" evidence="2">
    <location>
        <begin position="193"/>
        <end position="450"/>
    </location>
</feature>
<feature type="domain" description="AGC-kinase C-terminal" evidence="3">
    <location>
        <begin position="451"/>
        <end position="528"/>
    </location>
</feature>
<feature type="active site" description="Proton acceptor" evidence="2 4">
    <location>
        <position position="316"/>
    </location>
</feature>
<feature type="binding site" evidence="2">
    <location>
        <begin position="199"/>
        <end position="207"/>
    </location>
    <ligand>
        <name>ATP</name>
        <dbReference type="ChEBI" id="CHEBI:30616"/>
    </ligand>
</feature>
<feature type="binding site" evidence="2">
    <location>
        <position position="222"/>
    </location>
    <ligand>
        <name>ATP</name>
        <dbReference type="ChEBI" id="CHEBI:30616"/>
    </ligand>
</feature>
<feature type="modified residue" description="Phosphothreonine" evidence="13">
    <location>
        <position position="350"/>
    </location>
</feature>
<feature type="modified residue" description="Phosphoserine" evidence="13">
    <location>
        <position position="517"/>
    </location>
</feature>
<feature type="splice variant" id="VSP_038163" description="In isoform c." evidence="19">
    <location>
        <begin position="255"/>
        <end position="541"/>
    </location>
</feature>
<feature type="splice variant" id="VSP_017044" description="In isoform b." evidence="18">
    <original>EQHYLCFVMQFANGGELFTHVRKCGT</original>
    <variation>TNDRLCFVMEFAIGGDLYYHLNREVQMNKEG</variation>
    <location>
        <begin position="262"/>
        <end position="287"/>
    </location>
</feature>
<feature type="splice variant" id="VSP_017045" description="In isoform b." evidence="18">
    <original>A</original>
    <variation>S</variation>
    <location>
        <position position="298"/>
    </location>
</feature>
<feature type="splice variant" id="VSP_017046" description="In isoform b." evidence="18">
    <original>RCDIVYRDM</original>
    <variation>ANSIVYRDL</variation>
    <location>
        <begin position="309"/>
        <end position="317"/>
    </location>
</feature>
<feature type="mutagenesis site" description="In mg144; causes a delay in apoptosis during embryonic development. Suppresses the dauer arrest phenotype of the age-1(mg44) null mutant." evidence="15 17">
    <original>A</original>
    <variation>T</variation>
    <location>
        <position position="183"/>
    </location>
</feature>
<feature type="mutagenesis site" description="Probable loss of kinase activity. Increased apoptosis during embryonic development in an akt-2 tm1075 mutant background." evidence="15">
    <original>K</original>
    <variation>M</variation>
    <location>
        <position position="222"/>
    </location>
</feature>
<sequence>MSMTSLSTKSRRQEDVVIEGWLHKKGEHIRNWRPRYFMIFNDGALLGFRAKPKEGQPFPEPLNDFMIKDAATMLFEKPRPNMFMVRCLQWTTVIERTFYAESAEVRQRWIHAIESISKKYKGTNANPQEELMETNQQPKIDEDSEFAGAAHAIMGQPSSGHGDNCSIDFRASMISIADTSEAAKRDKITMEDFDFLKVLGKGTFGKVILCKEKRTQKLYAIKILKKDVIIAREEVAHTLTENRVLQRCKHPFLTELKYSFQEQHYLCFVMQFANGGELFTHVRKCGTFSEPRARFYGAEIVLALGYLHRCDIVYRDMKLENLLLDKDGHIKIADFGLCKEEISFGDKTSTFCGTPEYLAPEVLDDHDYGRCVDWWGVGVVMYEMMCGRLPFYSKDHNKLFELIMAGDLRFPSKLSQEARTLLTGLLVKDPTQRLGGGPEDALEICRADFFRTVDWEATYRKEIEPPYKPNVQSETDTSYFDNEFTSQPVQLTPPSRSGALATVDEQEEMQSNFTQFSFHNVMGSINRIHEASEDNEDYDMG</sequence>
<keyword id="KW-0025">Alternative splicing</keyword>
<keyword id="KW-0067">ATP-binding</keyword>
<keyword id="KW-0112">Calmodulin-binding</keyword>
<keyword id="KW-0217">Developmental protein</keyword>
<keyword id="KW-0391">Immunity</keyword>
<keyword id="KW-0399">Innate immunity</keyword>
<keyword id="KW-0418">Kinase</keyword>
<keyword id="KW-0446">Lipid-binding</keyword>
<keyword id="KW-0460">Magnesium</keyword>
<keyword id="KW-0479">Metal-binding</keyword>
<keyword id="KW-0547">Nucleotide-binding</keyword>
<keyword id="KW-0597">Phosphoprotein</keyword>
<keyword id="KW-1185">Reference proteome</keyword>
<keyword id="KW-0723">Serine/threonine-protein kinase</keyword>
<keyword id="KW-0808">Transferase</keyword>
<organism>
    <name type="scientific">Caenorhabditis elegans</name>
    <dbReference type="NCBI Taxonomy" id="6239"/>
    <lineage>
        <taxon>Eukaryota</taxon>
        <taxon>Metazoa</taxon>
        <taxon>Ecdysozoa</taxon>
        <taxon>Nematoda</taxon>
        <taxon>Chromadorea</taxon>
        <taxon>Rhabditida</taxon>
        <taxon>Rhabditina</taxon>
        <taxon>Rhabditomorpha</taxon>
        <taxon>Rhabditoidea</taxon>
        <taxon>Rhabditidae</taxon>
        <taxon>Peloderinae</taxon>
        <taxon>Caenorhabditis</taxon>
    </lineage>
</organism>
<comment type="function">
    <text evidence="5 6 7 8 9 11 12 14 15 16 17">Acts downstream of PI3 kinase age-1 and kinase pdk-1 in the daf-2/insulin receptor-like transduction pathway. Phosphorylates Forkhead-related daf-16 and the longevity-promoting skn-1 transcription factors, which inhibits their entry into the nucleus and antagonizes their functions (PubMed:11381260, PubMed:11747825, PubMed:15068796, PubMed:18358814, PubMed:9716402). Plays a role in maintaining the gonadal basement membrane through it's role in inhibiting daf-16 activity (PubMed:22916022). Has an essential role in regulating developmental arrest at the dauer stage (PubMed:10364160). Plays a role in immune function and pathogen resistance (PubMed:18782349). Regulates salt chemotaxis learning (PubMed:16950159, PubMed:30779740). Downstream of age-1 and together with akt-2 and sgk-1, promotes cell survival during embryonic development (PubMed:25383666).</text>
</comment>
<comment type="catalytic activity">
    <reaction>
        <text>L-seryl-[protein] + ATP = O-phospho-L-seryl-[protein] + ADP + H(+)</text>
        <dbReference type="Rhea" id="RHEA:17989"/>
        <dbReference type="Rhea" id="RHEA-COMP:9863"/>
        <dbReference type="Rhea" id="RHEA-COMP:11604"/>
        <dbReference type="ChEBI" id="CHEBI:15378"/>
        <dbReference type="ChEBI" id="CHEBI:29999"/>
        <dbReference type="ChEBI" id="CHEBI:30616"/>
        <dbReference type="ChEBI" id="CHEBI:83421"/>
        <dbReference type="ChEBI" id="CHEBI:456216"/>
        <dbReference type="EC" id="2.7.11.1"/>
    </reaction>
</comment>
<comment type="catalytic activity">
    <reaction>
        <text>L-threonyl-[protein] + ATP = O-phospho-L-threonyl-[protein] + ADP + H(+)</text>
        <dbReference type="Rhea" id="RHEA:46608"/>
        <dbReference type="Rhea" id="RHEA-COMP:11060"/>
        <dbReference type="Rhea" id="RHEA-COMP:11605"/>
        <dbReference type="ChEBI" id="CHEBI:15378"/>
        <dbReference type="ChEBI" id="CHEBI:30013"/>
        <dbReference type="ChEBI" id="CHEBI:30616"/>
        <dbReference type="ChEBI" id="CHEBI:61977"/>
        <dbReference type="ChEBI" id="CHEBI:456216"/>
        <dbReference type="EC" id="2.7.11.1"/>
    </reaction>
</comment>
<comment type="cofactor">
    <cofactor>
        <name>Mg(2+)</name>
        <dbReference type="ChEBI" id="CHEBI:18420"/>
    </cofactor>
</comment>
<comment type="activity regulation">
    <text evidence="8">Phosphorylated and activated by pdk-1.</text>
</comment>
<comment type="subunit">
    <text evidence="8 10 13">Interacts with pdk-1, sgk-1, akt-2 and daf-16 (PubMed:15068796). Part of a complex containing sgk-1, akt-1 and akt-2 (PubMed:15068796). Interacts with cmd-1 in the presence of Ca(2+) (PubMed:17854888). Interacts with let-92 phosphatase regulatory subunit pptr-1 (PubMed:19249087).</text>
</comment>
<comment type="interaction">
    <interactant intactId="EBI-1770718">
        <id>Q17941</id>
    </interactant>
    <interactant intactId="EBI-320656">
        <id>Q9XTG7</id>
        <label>akt-2</label>
    </interactant>
    <organismsDiffer>false</organismsDiffer>
    <experiments>2</experiments>
</comment>
<comment type="interaction">
    <interactant intactId="EBI-1770718">
        <id>Q17941</id>
    </interactant>
    <interactant intactId="EBI-324028">
        <id>O16850</id>
        <label>daf-16</label>
    </interactant>
    <organismsDiffer>false</organismsDiffer>
    <experiments>3</experiments>
</comment>
<comment type="interaction">
    <interactant intactId="EBI-1770718">
        <id>Q17941</id>
    </interactant>
    <interactant intactId="EBI-316684">
        <id>G5EFM0</id>
        <label>mdf-1</label>
    </interactant>
    <organismsDiffer>false</organismsDiffer>
    <experiments>2</experiments>
</comment>
<comment type="interaction">
    <interactant intactId="EBI-1770718">
        <id>Q17941</id>
    </interactant>
    <interactant intactId="EBI-2298122">
        <id>O18178</id>
        <label>pptr-1</label>
    </interactant>
    <organismsDiffer>false</organismsDiffer>
    <experiments>3</experiments>
</comment>
<comment type="interaction">
    <interactant intactId="EBI-1770718">
        <id>Q17941</id>
    </interactant>
    <interactant intactId="EBI-1770776">
        <id>Q2PJ68</id>
        <label>sgk-1</label>
    </interactant>
    <organismsDiffer>false</organismsDiffer>
    <experiments>3</experiments>
</comment>
<comment type="alternative products">
    <event type="alternative splicing"/>
    <isoform>
        <id>Q17941-1</id>
        <name evidence="20">a</name>
        <sequence type="displayed"/>
    </isoform>
    <isoform>
        <id>Q17941-2</id>
        <name evidence="21">b</name>
        <sequence type="described" ref="VSP_017044 VSP_017045 VSP_017046"/>
    </isoform>
    <isoform>
        <id>Q17941-3</id>
        <name evidence="22">c</name>
        <sequence type="described" ref="VSP_038163"/>
    </isoform>
</comment>
<comment type="tissue specificity">
    <text evidence="13 17">Expressed in neurons, muscle cells of the pharynx, rectal gland cells, vulva and spermatheca.</text>
</comment>
<comment type="developmental stage">
    <text evidence="17">Expressed in late stage embryos and throughout life.</text>
</comment>
<comment type="domain">
    <text evidence="15">The PH domain binds to phosphatidylinositol 3,4,5-trisphosphate (PtdIns(3,4,5)P3) resulting in its targeting to the plasma membrane.</text>
</comment>
<comment type="disruption phenotype">
    <text evidence="8 12">Increased resistance to pathogens. Simultaneous knockdown of akt-1 and akt-2 result in dauer formation and a weak extension to life span.</text>
</comment>
<comment type="similarity">
    <text evidence="19">Belongs to the protein kinase superfamily. AGC Ser/Thr protein kinase family. RAC subfamily.</text>
</comment>
<dbReference type="EC" id="2.7.11.1"/>
<dbReference type="EMBL" id="AF072379">
    <property type="protein sequence ID" value="AAC62466.1"/>
    <property type="molecule type" value="mRNA"/>
</dbReference>
<dbReference type="EMBL" id="AF072380">
    <property type="protein sequence ID" value="AAC62467.1"/>
    <property type="molecule type" value="mRNA"/>
</dbReference>
<dbReference type="EMBL" id="BX284605">
    <property type="protein sequence ID" value="CAA98238.1"/>
    <property type="molecule type" value="Genomic_DNA"/>
</dbReference>
<dbReference type="EMBL" id="BX284605">
    <property type="protein sequence ID" value="CAA98240.1"/>
    <property type="molecule type" value="Genomic_DNA"/>
</dbReference>
<dbReference type="EMBL" id="BX284605">
    <property type="protein sequence ID" value="CAD44085.1"/>
    <property type="molecule type" value="Genomic_DNA"/>
</dbReference>
<dbReference type="PIR" id="T43232">
    <property type="entry name" value="T43232"/>
</dbReference>
<dbReference type="PIR" id="T43233">
    <property type="entry name" value="T43233"/>
</dbReference>
<dbReference type="RefSeq" id="NP_001023645.1">
    <molecule id="Q17941-1"/>
    <property type="nucleotide sequence ID" value="NM_001028474.8"/>
</dbReference>
<dbReference type="RefSeq" id="NP_001023646.1">
    <molecule id="Q17941-2"/>
    <property type="nucleotide sequence ID" value="NM_001028475.5"/>
</dbReference>
<dbReference type="RefSeq" id="NP_001023647.1">
    <molecule id="Q17941-3"/>
    <property type="nucleotide sequence ID" value="NM_001028476.7"/>
</dbReference>
<dbReference type="SMR" id="Q17941"/>
<dbReference type="BioGRID" id="44454">
    <property type="interactions" value="17"/>
</dbReference>
<dbReference type="ComplexPortal" id="CPX-1129">
    <property type="entry name" value="Atk-1/Akt-2/Sgk-1 protein kinase complex"/>
</dbReference>
<dbReference type="FunCoup" id="Q17941">
    <property type="interactions" value="2159"/>
</dbReference>
<dbReference type="IntAct" id="Q17941">
    <property type="interactions" value="9"/>
</dbReference>
<dbReference type="MINT" id="Q17941"/>
<dbReference type="STRING" id="6239.C12D8.10b.2"/>
<dbReference type="iPTMnet" id="Q17941"/>
<dbReference type="PaxDb" id="6239-C12D8.10b"/>
<dbReference type="PeptideAtlas" id="Q17941"/>
<dbReference type="EnsemblMetazoa" id="C12D8.10a.1">
    <molecule id="Q17941-1"/>
    <property type="protein sequence ID" value="C12D8.10a.1"/>
    <property type="gene ID" value="WBGene00000102"/>
</dbReference>
<dbReference type="EnsemblMetazoa" id="C12D8.10b.1">
    <molecule id="Q17941-2"/>
    <property type="protein sequence ID" value="C12D8.10b.1"/>
    <property type="gene ID" value="WBGene00000102"/>
</dbReference>
<dbReference type="EnsemblMetazoa" id="C12D8.10c.1">
    <molecule id="Q17941-3"/>
    <property type="protein sequence ID" value="C12D8.10c.1"/>
    <property type="gene ID" value="WBGene00000102"/>
</dbReference>
<dbReference type="GeneID" id="179424"/>
<dbReference type="KEGG" id="cel:CELE_C12D8.10"/>
<dbReference type="UCSC" id="C12D8.10b.1">
    <molecule id="Q17941-1"/>
    <property type="organism name" value="c. elegans"/>
</dbReference>
<dbReference type="AGR" id="WB:WBGene00000102"/>
<dbReference type="CTD" id="179424"/>
<dbReference type="WormBase" id="C12D8.10a">
    <molecule id="Q17941-1"/>
    <property type="protein sequence ID" value="CE15612"/>
    <property type="gene ID" value="WBGene00000102"/>
    <property type="gene designation" value="akt-1"/>
</dbReference>
<dbReference type="WormBase" id="C12D8.10b">
    <molecule id="Q17941-2"/>
    <property type="protein sequence ID" value="CE05274"/>
    <property type="gene ID" value="WBGene00000102"/>
    <property type="gene designation" value="akt-1"/>
</dbReference>
<dbReference type="WormBase" id="C12D8.10c">
    <molecule id="Q17941-3"/>
    <property type="protein sequence ID" value="CE31304"/>
    <property type="gene ID" value="WBGene00000102"/>
    <property type="gene designation" value="akt-1"/>
</dbReference>
<dbReference type="eggNOG" id="KOG0690">
    <property type="taxonomic scope" value="Eukaryota"/>
</dbReference>
<dbReference type="GeneTree" id="ENSGT00940000168810"/>
<dbReference type="InParanoid" id="Q17941"/>
<dbReference type="OMA" id="CIDNERR"/>
<dbReference type="OrthoDB" id="63267at2759"/>
<dbReference type="PhylomeDB" id="Q17941"/>
<dbReference type="Reactome" id="R-CEL-1257604">
    <property type="pathway name" value="PIP3 activates AKT signaling"/>
</dbReference>
<dbReference type="Reactome" id="R-CEL-1474151">
    <property type="pathway name" value="Tetrahydrobiopterin (BH4) synthesis, recycling, salvage and regulation"/>
</dbReference>
<dbReference type="Reactome" id="R-CEL-165158">
    <property type="pathway name" value="Activation of AKT2"/>
</dbReference>
<dbReference type="Reactome" id="R-CEL-165159">
    <property type="pathway name" value="MTOR signalling"/>
</dbReference>
<dbReference type="Reactome" id="R-CEL-198323">
    <property type="pathway name" value="AKT phosphorylates targets in the cytosol"/>
</dbReference>
<dbReference type="Reactome" id="R-CEL-198693">
    <property type="pathway name" value="AKT phosphorylates targets in the nucleus"/>
</dbReference>
<dbReference type="Reactome" id="R-CEL-199418">
    <property type="pathway name" value="Negative regulation of the PI3K/AKT network"/>
</dbReference>
<dbReference type="Reactome" id="R-CEL-203615">
    <property type="pathway name" value="eNOS activation"/>
</dbReference>
<dbReference type="Reactome" id="R-CEL-211163">
    <property type="pathway name" value="AKT-mediated inactivation of FOXO1A"/>
</dbReference>
<dbReference type="Reactome" id="R-CEL-354192">
    <property type="pathway name" value="Integrin signaling"/>
</dbReference>
<dbReference type="Reactome" id="R-CEL-389357">
    <property type="pathway name" value="CD28 dependent PI3K/Akt signaling"/>
</dbReference>
<dbReference type="Reactome" id="R-CEL-389513">
    <property type="pathway name" value="Co-inhibition by CTLA4"/>
</dbReference>
<dbReference type="Reactome" id="R-CEL-392451">
    <property type="pathway name" value="G beta:gamma signalling through PI3Kgamma"/>
</dbReference>
<dbReference type="Reactome" id="R-CEL-450385">
    <property type="pathway name" value="Butyrate Response Factor 1 (BRF1) binds and destabilizes mRNA"/>
</dbReference>
<dbReference type="Reactome" id="R-CEL-450604">
    <property type="pathway name" value="KSRP (KHSRP) binds and destabilizes mRNA"/>
</dbReference>
<dbReference type="Reactome" id="R-CEL-5218920">
    <property type="pathway name" value="VEGFR2 mediated vascular permeability"/>
</dbReference>
<dbReference type="Reactome" id="R-CEL-6804758">
    <property type="pathway name" value="Regulation of TP53 Activity through Acetylation"/>
</dbReference>
<dbReference type="Reactome" id="R-CEL-6811558">
    <property type="pathway name" value="PI5P, PP2A and IER3 Regulate PI3K/AKT Signaling"/>
</dbReference>
<dbReference type="Reactome" id="R-CEL-69202">
    <property type="pathway name" value="Cyclin E associated events during G1/S transition"/>
</dbReference>
<dbReference type="Reactome" id="R-CEL-69656">
    <property type="pathway name" value="Cyclin A:Cdk2-associated events at S phase entry"/>
</dbReference>
<dbReference type="Reactome" id="R-CEL-8849469">
    <property type="pathway name" value="PTK6 Regulates RTKs and Their Effectors AKT1 and DOK1"/>
</dbReference>
<dbReference type="Reactome" id="R-CEL-8876198">
    <property type="pathway name" value="RAB GEFs exchange GTP for GDP on RABs"/>
</dbReference>
<dbReference type="Reactome" id="R-CEL-8948751">
    <property type="pathway name" value="Regulation of PTEN stability and activity"/>
</dbReference>
<dbReference type="Reactome" id="R-CEL-9009391">
    <property type="pathway name" value="Extra-nuclear estrogen signaling"/>
</dbReference>
<dbReference type="Reactome" id="R-CEL-9604323">
    <property type="pathway name" value="Negative regulation of NOTCH4 signaling"/>
</dbReference>
<dbReference type="Reactome" id="R-CEL-9607240">
    <property type="pathway name" value="FLT3 Signaling"/>
</dbReference>
<dbReference type="Reactome" id="R-CEL-9614399">
    <property type="pathway name" value="Regulation of localization of FOXO transcription factors"/>
</dbReference>
<dbReference type="Reactome" id="R-CEL-9634638">
    <property type="pathway name" value="Estrogen-dependent nuclear events downstream of ESR-membrane signaling"/>
</dbReference>
<dbReference type="Reactome" id="R-CEL-9755511">
    <property type="pathway name" value="KEAP1-NFE2L2 pathway"/>
</dbReference>
<dbReference type="Reactome" id="R-CEL-9841251">
    <property type="pathway name" value="Mitochondrial unfolded protein response (UPRmt)"/>
</dbReference>
<dbReference type="Reactome" id="R-CEL-9856530">
    <property type="pathway name" value="High laminar flow shear stress activates signaling by PIEZO1 and PECAM1:CDH5:KDR in endothelial cells"/>
</dbReference>
<dbReference type="Reactome" id="R-CEL-9856649">
    <property type="pathway name" value="Transcriptional and post-translational regulation of MITF-M expression and activity"/>
</dbReference>
<dbReference type="SignaLink" id="Q17941"/>
<dbReference type="PRO" id="PR:Q17941"/>
<dbReference type="Proteomes" id="UP000001940">
    <property type="component" value="Chromosome V"/>
</dbReference>
<dbReference type="Bgee" id="WBGene00000102">
    <property type="expression patterns" value="Expressed in germ line (C elegans) and 4 other cell types or tissues"/>
</dbReference>
<dbReference type="GO" id="GO:0030424">
    <property type="term" value="C:axon"/>
    <property type="evidence" value="ECO:0000314"/>
    <property type="project" value="WormBase"/>
</dbReference>
<dbReference type="GO" id="GO:0009898">
    <property type="term" value="C:cytoplasmic side of plasma membrane"/>
    <property type="evidence" value="ECO:0000314"/>
    <property type="project" value="WormBase"/>
</dbReference>
<dbReference type="GO" id="GO:0030425">
    <property type="term" value="C:dendrite"/>
    <property type="evidence" value="ECO:0000314"/>
    <property type="project" value="WormBase"/>
</dbReference>
<dbReference type="GO" id="GO:0043025">
    <property type="term" value="C:neuronal cell body"/>
    <property type="evidence" value="ECO:0000314"/>
    <property type="project" value="WormBase"/>
</dbReference>
<dbReference type="GO" id="GO:1902911">
    <property type="term" value="C:protein kinase complex"/>
    <property type="evidence" value="ECO:0000353"/>
    <property type="project" value="ComplexPortal"/>
</dbReference>
<dbReference type="GO" id="GO:0005524">
    <property type="term" value="F:ATP binding"/>
    <property type="evidence" value="ECO:0007669"/>
    <property type="project" value="UniProtKB-KW"/>
</dbReference>
<dbReference type="GO" id="GO:0005516">
    <property type="term" value="F:calmodulin binding"/>
    <property type="evidence" value="ECO:0000314"/>
    <property type="project" value="WormBase"/>
</dbReference>
<dbReference type="GO" id="GO:0046872">
    <property type="term" value="F:metal ion binding"/>
    <property type="evidence" value="ECO:0007669"/>
    <property type="project" value="UniProtKB-KW"/>
</dbReference>
<dbReference type="GO" id="GO:0005547">
    <property type="term" value="F:phosphatidylinositol-3,4,5-trisphosphate binding"/>
    <property type="evidence" value="ECO:0000314"/>
    <property type="project" value="WormBase"/>
</dbReference>
<dbReference type="GO" id="GO:0106310">
    <property type="term" value="F:protein serine kinase activity"/>
    <property type="evidence" value="ECO:0007669"/>
    <property type="project" value="RHEA"/>
</dbReference>
<dbReference type="GO" id="GO:0004674">
    <property type="term" value="F:protein serine/threonine kinase activity"/>
    <property type="evidence" value="ECO:0000314"/>
    <property type="project" value="WormBase"/>
</dbReference>
<dbReference type="GO" id="GO:0007635">
    <property type="term" value="P:chemosensory behavior"/>
    <property type="evidence" value="ECO:0000316"/>
    <property type="project" value="UniProtKB"/>
</dbReference>
<dbReference type="GO" id="GO:0006935">
    <property type="term" value="P:chemotaxis"/>
    <property type="evidence" value="ECO:0000316"/>
    <property type="project" value="UniProtKB"/>
</dbReference>
<dbReference type="GO" id="GO:0008340">
    <property type="term" value="P:determination of adult lifespan"/>
    <property type="evidence" value="ECO:0000315"/>
    <property type="project" value="WormBase"/>
</dbReference>
<dbReference type="GO" id="GO:0045087">
    <property type="term" value="P:innate immune response"/>
    <property type="evidence" value="ECO:0007669"/>
    <property type="project" value="UniProtKB-KW"/>
</dbReference>
<dbReference type="GO" id="GO:0008286">
    <property type="term" value="P:insulin receptor signaling pathway"/>
    <property type="evidence" value="ECO:0000315"/>
    <property type="project" value="WormBase"/>
</dbReference>
<dbReference type="GO" id="GO:0035556">
    <property type="term" value="P:intracellular signal transduction"/>
    <property type="evidence" value="ECO:0000318"/>
    <property type="project" value="GO_Central"/>
</dbReference>
<dbReference type="GO" id="GO:0042771">
    <property type="term" value="P:intrinsic apoptotic signaling pathway in response to DNA damage by p53 class mediator"/>
    <property type="evidence" value="ECO:0000315"/>
    <property type="project" value="CACAO"/>
</dbReference>
<dbReference type="GO" id="GO:0010468">
    <property type="term" value="P:regulation of gene expression"/>
    <property type="evidence" value="ECO:0000314"/>
    <property type="project" value="ComplexPortal"/>
</dbReference>
<dbReference type="GO" id="GO:0008582">
    <property type="term" value="P:regulation of synaptic assembly at neuromuscular junction"/>
    <property type="evidence" value="ECO:0000316"/>
    <property type="project" value="UniProtKB"/>
</dbReference>
<dbReference type="GO" id="GO:1902074">
    <property type="term" value="P:response to salt"/>
    <property type="evidence" value="ECO:0000316"/>
    <property type="project" value="UniProtKB"/>
</dbReference>
<dbReference type="CDD" id="cd01241">
    <property type="entry name" value="PH_PKB"/>
    <property type="match status" value="1"/>
</dbReference>
<dbReference type="CDD" id="cd05571">
    <property type="entry name" value="STKc_PKB"/>
    <property type="match status" value="1"/>
</dbReference>
<dbReference type="FunFam" id="1.10.510.10:FF:000033">
    <property type="entry name" value="Non-specific serine/threonine protein kinase"/>
    <property type="match status" value="1"/>
</dbReference>
<dbReference type="FunFam" id="2.30.29.30:FF:000404">
    <property type="entry name" value="Non-specific serine/threonine protein kinase"/>
    <property type="match status" value="1"/>
</dbReference>
<dbReference type="FunFam" id="3.30.200.20:FF:000362">
    <property type="entry name" value="Non-specific serine/threonine protein kinase"/>
    <property type="match status" value="1"/>
</dbReference>
<dbReference type="Gene3D" id="3.30.200.20">
    <property type="entry name" value="Phosphorylase Kinase, domain 1"/>
    <property type="match status" value="1"/>
</dbReference>
<dbReference type="Gene3D" id="2.30.29.30">
    <property type="entry name" value="Pleckstrin-homology domain (PH domain)/Phosphotyrosine-binding domain (PTB)"/>
    <property type="match status" value="1"/>
</dbReference>
<dbReference type="Gene3D" id="1.10.510.10">
    <property type="entry name" value="Transferase(Phosphotransferase) domain 1"/>
    <property type="match status" value="1"/>
</dbReference>
<dbReference type="InterPro" id="IPR000961">
    <property type="entry name" value="AGC-kinase_C"/>
</dbReference>
<dbReference type="InterPro" id="IPR011009">
    <property type="entry name" value="Kinase-like_dom_sf"/>
</dbReference>
<dbReference type="InterPro" id="IPR011993">
    <property type="entry name" value="PH-like_dom_sf"/>
</dbReference>
<dbReference type="InterPro" id="IPR001849">
    <property type="entry name" value="PH_domain"/>
</dbReference>
<dbReference type="InterPro" id="IPR039026">
    <property type="entry name" value="PH_PKB"/>
</dbReference>
<dbReference type="InterPro" id="IPR017892">
    <property type="entry name" value="Pkinase_C"/>
</dbReference>
<dbReference type="InterPro" id="IPR000719">
    <property type="entry name" value="Prot_kinase_dom"/>
</dbReference>
<dbReference type="InterPro" id="IPR017441">
    <property type="entry name" value="Protein_kinase_ATP_BS"/>
</dbReference>
<dbReference type="InterPro" id="IPR008271">
    <property type="entry name" value="Ser/Thr_kinase_AS"/>
</dbReference>
<dbReference type="PANTHER" id="PTHR24351">
    <property type="entry name" value="RIBOSOMAL PROTEIN S6 KINASE"/>
    <property type="match status" value="1"/>
</dbReference>
<dbReference type="Pfam" id="PF00169">
    <property type="entry name" value="PH"/>
    <property type="match status" value="1"/>
</dbReference>
<dbReference type="Pfam" id="PF00069">
    <property type="entry name" value="Pkinase"/>
    <property type="match status" value="1"/>
</dbReference>
<dbReference type="Pfam" id="PF00433">
    <property type="entry name" value="Pkinase_C"/>
    <property type="match status" value="1"/>
</dbReference>
<dbReference type="SMART" id="SM00233">
    <property type="entry name" value="PH"/>
    <property type="match status" value="1"/>
</dbReference>
<dbReference type="SMART" id="SM00133">
    <property type="entry name" value="S_TK_X"/>
    <property type="match status" value="1"/>
</dbReference>
<dbReference type="SMART" id="SM00220">
    <property type="entry name" value="S_TKc"/>
    <property type="match status" value="1"/>
</dbReference>
<dbReference type="SUPFAM" id="SSF50729">
    <property type="entry name" value="PH domain-like"/>
    <property type="match status" value="1"/>
</dbReference>
<dbReference type="SUPFAM" id="SSF56112">
    <property type="entry name" value="Protein kinase-like (PK-like)"/>
    <property type="match status" value="1"/>
</dbReference>
<dbReference type="PROSITE" id="PS51285">
    <property type="entry name" value="AGC_KINASE_CTER"/>
    <property type="match status" value="1"/>
</dbReference>
<dbReference type="PROSITE" id="PS50003">
    <property type="entry name" value="PH_DOMAIN"/>
    <property type="match status" value="1"/>
</dbReference>
<dbReference type="PROSITE" id="PS00107">
    <property type="entry name" value="PROTEIN_KINASE_ATP"/>
    <property type="match status" value="1"/>
</dbReference>
<dbReference type="PROSITE" id="PS50011">
    <property type="entry name" value="PROTEIN_KINASE_DOM"/>
    <property type="match status" value="1"/>
</dbReference>
<dbReference type="PROSITE" id="PS00108">
    <property type="entry name" value="PROTEIN_KINASE_ST"/>
    <property type="match status" value="1"/>
</dbReference>
<accession>Q17941</accession>
<accession>Q17942</accession>
<accession>Q8MQE0</accession>
<proteinExistence type="evidence at protein level"/>
<name>AKT1_CAEEL</name>
<protein>
    <recommendedName>
        <fullName>Serine/threonine-protein kinase akt-1</fullName>
        <ecNumber>2.7.11.1</ecNumber>
    </recommendedName>
    <alternativeName>
        <fullName>Protein kinase B akt-1</fullName>
        <shortName>PKB akt-1</shortName>
    </alternativeName>
</protein>